<keyword id="KW-0007">Acetylation</keyword>
<keyword id="KW-0963">Cytoplasm</keyword>
<keyword id="KW-0456">Lyase</keyword>
<keyword id="KW-0479">Metal-binding</keyword>
<keyword id="KW-1185">Reference proteome</keyword>
<keyword id="KW-0862">Zinc</keyword>
<sequence>MASPDWGYDGENGPEHWGKLYPIANGNNQSPIDIKTSETKRDPSLKPLSVSYNPATAKEIVNVGHSFHVNFEDSDNRSVLKGGPLSESYRLRQFHFHWGITDDCGSEHLVDGAKFSAELHLVHWNSAKYPSFADAASQADGLALIGVLVKVGQANPNLQKVLDALKAVKNKNKKAPFTNFDPSVLLPPSLDYWAYSGSLTHPPLHESVTWIIFKETISVSSEQLAQFRSLLANAEGDREVHIKQNNRPPQPLNGRTVKASF</sequence>
<feature type="initiator methionine" description="Removed" evidence="2">
    <location>
        <position position="1"/>
    </location>
</feature>
<feature type="chain" id="PRO_0000262536" description="Carbonic anhydrase 1">
    <location>
        <begin position="2"/>
        <end position="261"/>
    </location>
</feature>
<feature type="domain" description="Alpha-carbonic anhydrase" evidence="4">
    <location>
        <begin position="4"/>
        <end position="261"/>
    </location>
</feature>
<feature type="active site" description="Proton donor/acceptor" evidence="3">
    <location>
        <position position="65"/>
    </location>
</feature>
<feature type="binding site" evidence="2">
    <location>
        <position position="95"/>
    </location>
    <ligand>
        <name>Zn(2+)</name>
        <dbReference type="ChEBI" id="CHEBI:29105"/>
        <note>catalytic</note>
    </ligand>
</feature>
<feature type="binding site" evidence="2">
    <location>
        <position position="97"/>
    </location>
    <ligand>
        <name>Zn(2+)</name>
        <dbReference type="ChEBI" id="CHEBI:29105"/>
        <note>catalytic</note>
    </ligand>
</feature>
<feature type="binding site" evidence="2">
    <location>
        <position position="120"/>
    </location>
    <ligand>
        <name>Zn(2+)</name>
        <dbReference type="ChEBI" id="CHEBI:29105"/>
        <note>catalytic</note>
    </ligand>
</feature>
<feature type="binding site" evidence="3">
    <location>
        <begin position="200"/>
        <end position="201"/>
    </location>
    <ligand>
        <name>substrate</name>
    </ligand>
</feature>
<feature type="binding site" evidence="2">
    <location>
        <position position="200"/>
    </location>
    <ligand>
        <name>substrate</name>
    </ligand>
</feature>
<feature type="modified residue" description="N-acetylalanine" evidence="2">
    <location>
        <position position="2"/>
    </location>
</feature>
<protein>
    <recommendedName>
        <fullName>Carbonic anhydrase 1</fullName>
        <ecNumber evidence="2">4.2.1.1</ecNumber>
    </recommendedName>
    <alternativeName>
        <fullName>Carbonate dehydratase I</fullName>
    </alternativeName>
    <alternativeName>
        <fullName>Carbonic anhydrase I</fullName>
        <shortName>CA-I</shortName>
    </alternativeName>
    <alternativeName>
        <fullName>Cyanamide hydratase CA1</fullName>
        <ecNumber evidence="2">4.2.1.69</ecNumber>
    </alternativeName>
</protein>
<evidence type="ECO:0000250" key="1">
    <source>
        <dbReference type="UniProtKB" id="B0BNN3"/>
    </source>
</evidence>
<evidence type="ECO:0000250" key="2">
    <source>
        <dbReference type="UniProtKB" id="P00915"/>
    </source>
</evidence>
<evidence type="ECO:0000250" key="3">
    <source>
        <dbReference type="UniProtKB" id="P00918"/>
    </source>
</evidence>
<evidence type="ECO:0000255" key="4">
    <source>
        <dbReference type="PROSITE-ProRule" id="PRU01134"/>
    </source>
</evidence>
<evidence type="ECO:0000305" key="5"/>
<dbReference type="EC" id="4.2.1.1" evidence="2"/>
<dbReference type="EC" id="4.2.1.69" evidence="2"/>
<dbReference type="EMBL" id="BC116126">
    <property type="protein sequence ID" value="AAI16127.1"/>
    <property type="molecule type" value="mRNA"/>
</dbReference>
<dbReference type="RefSeq" id="NP_001068934.1">
    <property type="nucleotide sequence ID" value="NM_001075466.1"/>
</dbReference>
<dbReference type="SMR" id="Q1LZA1"/>
<dbReference type="FunCoup" id="Q1LZA1">
    <property type="interactions" value="453"/>
</dbReference>
<dbReference type="STRING" id="9913.ENSBTAP00000043090"/>
<dbReference type="PaxDb" id="9913-ENSBTAP00000043090"/>
<dbReference type="PeptideAtlas" id="Q1LZA1"/>
<dbReference type="Ensembl" id="ENSBTAT00000045723.2">
    <property type="protein sequence ID" value="ENSBTAP00000043090.1"/>
    <property type="gene ID" value="ENSBTAG00000036116.3"/>
</dbReference>
<dbReference type="GeneID" id="510801"/>
<dbReference type="KEGG" id="bta:510801"/>
<dbReference type="CTD" id="759"/>
<dbReference type="VEuPathDB" id="HostDB:ENSBTAG00000032236"/>
<dbReference type="eggNOG" id="KOG0382">
    <property type="taxonomic scope" value="Eukaryota"/>
</dbReference>
<dbReference type="GeneTree" id="ENSGT00940000161270"/>
<dbReference type="HOGENOM" id="CLU_039326_2_1_1"/>
<dbReference type="InParanoid" id="Q1LZA1"/>
<dbReference type="OMA" id="FHVNYED"/>
<dbReference type="OrthoDB" id="429145at2759"/>
<dbReference type="TreeFam" id="TF316425"/>
<dbReference type="Reactome" id="R-BTA-1237044">
    <property type="pathway name" value="Erythrocytes take up carbon dioxide and release oxygen"/>
</dbReference>
<dbReference type="Reactome" id="R-BTA-1247673">
    <property type="pathway name" value="Erythrocytes take up oxygen and release carbon dioxide"/>
</dbReference>
<dbReference type="Reactome" id="R-BTA-1475029">
    <property type="pathway name" value="Reversible hydration of carbon dioxide"/>
</dbReference>
<dbReference type="Proteomes" id="UP000009136">
    <property type="component" value="Chromosome 14"/>
</dbReference>
<dbReference type="Bgee" id="ENSBTAG00000032236">
    <property type="expression patterns" value="Expressed in caecum and 36 other cell types or tissues"/>
</dbReference>
<dbReference type="GO" id="GO:0005737">
    <property type="term" value="C:cytoplasm"/>
    <property type="evidence" value="ECO:0000318"/>
    <property type="project" value="GO_Central"/>
</dbReference>
<dbReference type="GO" id="GO:0004089">
    <property type="term" value="F:carbonate dehydratase activity"/>
    <property type="evidence" value="ECO:0000250"/>
    <property type="project" value="UniProtKB"/>
</dbReference>
<dbReference type="GO" id="GO:0018820">
    <property type="term" value="F:cyanamide hydratase activity"/>
    <property type="evidence" value="ECO:0000250"/>
    <property type="project" value="UniProtKB"/>
</dbReference>
<dbReference type="GO" id="GO:0008270">
    <property type="term" value="F:zinc ion binding"/>
    <property type="evidence" value="ECO:0007669"/>
    <property type="project" value="InterPro"/>
</dbReference>
<dbReference type="FunFam" id="3.10.200.10:FF:000001">
    <property type="entry name" value="Carbonic anhydrase 2"/>
    <property type="match status" value="1"/>
</dbReference>
<dbReference type="Gene3D" id="3.10.200.10">
    <property type="entry name" value="Alpha carbonic anhydrase"/>
    <property type="match status" value="1"/>
</dbReference>
<dbReference type="InterPro" id="IPR001148">
    <property type="entry name" value="CA_dom"/>
</dbReference>
<dbReference type="InterPro" id="IPR036398">
    <property type="entry name" value="CA_dom_sf"/>
</dbReference>
<dbReference type="InterPro" id="IPR023561">
    <property type="entry name" value="Carbonic_anhydrase_a-class"/>
</dbReference>
<dbReference type="InterPro" id="IPR018338">
    <property type="entry name" value="Carbonic_anhydrase_a-class_CS"/>
</dbReference>
<dbReference type="PANTHER" id="PTHR18952">
    <property type="entry name" value="CARBONIC ANHYDRASE"/>
    <property type="match status" value="1"/>
</dbReference>
<dbReference type="PANTHER" id="PTHR18952:SF282">
    <property type="entry name" value="CARBONIC ANHYDRASE 1"/>
    <property type="match status" value="1"/>
</dbReference>
<dbReference type="Pfam" id="PF00194">
    <property type="entry name" value="Carb_anhydrase"/>
    <property type="match status" value="1"/>
</dbReference>
<dbReference type="SMART" id="SM01057">
    <property type="entry name" value="Carb_anhydrase"/>
    <property type="match status" value="1"/>
</dbReference>
<dbReference type="SUPFAM" id="SSF51069">
    <property type="entry name" value="Carbonic anhydrase"/>
    <property type="match status" value="1"/>
</dbReference>
<dbReference type="PROSITE" id="PS00162">
    <property type="entry name" value="ALPHA_CA_1"/>
    <property type="match status" value="1"/>
</dbReference>
<dbReference type="PROSITE" id="PS51144">
    <property type="entry name" value="ALPHA_CA_2"/>
    <property type="match status" value="1"/>
</dbReference>
<gene>
    <name type="primary">CA1</name>
</gene>
<organism>
    <name type="scientific">Bos taurus</name>
    <name type="common">Bovine</name>
    <dbReference type="NCBI Taxonomy" id="9913"/>
    <lineage>
        <taxon>Eukaryota</taxon>
        <taxon>Metazoa</taxon>
        <taxon>Chordata</taxon>
        <taxon>Craniata</taxon>
        <taxon>Vertebrata</taxon>
        <taxon>Euteleostomi</taxon>
        <taxon>Mammalia</taxon>
        <taxon>Eutheria</taxon>
        <taxon>Laurasiatheria</taxon>
        <taxon>Artiodactyla</taxon>
        <taxon>Ruminantia</taxon>
        <taxon>Pecora</taxon>
        <taxon>Bovidae</taxon>
        <taxon>Bovinae</taxon>
        <taxon>Bos</taxon>
    </lineage>
</organism>
<accession>Q1LZA1</accession>
<name>CAH1_BOVIN</name>
<comment type="function">
    <text evidence="2">Catalyzes the reversible hydration of carbon dioxide. Can hydrate cyanamide to urea.</text>
</comment>
<comment type="catalytic activity">
    <reaction evidence="2">
        <text>hydrogencarbonate + H(+) = CO2 + H2O</text>
        <dbReference type="Rhea" id="RHEA:10748"/>
        <dbReference type="ChEBI" id="CHEBI:15377"/>
        <dbReference type="ChEBI" id="CHEBI:15378"/>
        <dbReference type="ChEBI" id="CHEBI:16526"/>
        <dbReference type="ChEBI" id="CHEBI:17544"/>
        <dbReference type="EC" id="4.2.1.1"/>
    </reaction>
</comment>
<comment type="catalytic activity">
    <reaction evidence="2">
        <text>urea = cyanamide + H2O</text>
        <dbReference type="Rhea" id="RHEA:23056"/>
        <dbReference type="ChEBI" id="CHEBI:15377"/>
        <dbReference type="ChEBI" id="CHEBI:16199"/>
        <dbReference type="ChEBI" id="CHEBI:16698"/>
        <dbReference type="EC" id="4.2.1.69"/>
    </reaction>
</comment>
<comment type="cofactor">
    <cofactor evidence="2">
        <name>Zn(2+)</name>
        <dbReference type="ChEBI" id="CHEBI:29105"/>
    </cofactor>
</comment>
<comment type="activity regulation">
    <text evidence="2">Inhibited by acetazolamide.</text>
</comment>
<comment type="subcellular location">
    <subcellularLocation>
        <location evidence="1">Cytoplasm</location>
    </subcellularLocation>
</comment>
<comment type="similarity">
    <text evidence="5">Belongs to the alpha-carbonic anhydrase family.</text>
</comment>
<reference key="1">
    <citation type="submission" date="2006-05" db="EMBL/GenBank/DDBJ databases">
        <authorList>
            <consortium name="NIH - Mammalian Gene Collection (MGC) project"/>
        </authorList>
    </citation>
    <scope>NUCLEOTIDE SEQUENCE [LARGE SCALE MRNA]</scope>
    <source>
        <strain>Hereford</strain>
        <tissue>Ascending colon</tissue>
    </source>
</reference>
<proteinExistence type="evidence at transcript level"/>